<comment type="similarity">
    <text evidence="1">Belongs to the bacterial ribosomal protein bS21 family.</text>
</comment>
<organism>
    <name type="scientific">Brucella ovis (strain ATCC 25840 / 63/290 / NCTC 10512)</name>
    <dbReference type="NCBI Taxonomy" id="444178"/>
    <lineage>
        <taxon>Bacteria</taxon>
        <taxon>Pseudomonadati</taxon>
        <taxon>Pseudomonadota</taxon>
        <taxon>Alphaproteobacteria</taxon>
        <taxon>Hyphomicrobiales</taxon>
        <taxon>Brucellaceae</taxon>
        <taxon>Brucella/Ochrobactrum group</taxon>
        <taxon>Brucella</taxon>
    </lineage>
</organism>
<accession>A5VVM8</accession>
<name>RS21_BRUO2</name>
<proteinExistence type="inferred from homology"/>
<keyword id="KW-0687">Ribonucleoprotein</keyword>
<keyword id="KW-0689">Ribosomal protein</keyword>
<feature type="chain" id="PRO_1000005098" description="Small ribosomal subunit protein bS21">
    <location>
        <begin position="1"/>
        <end position="75"/>
    </location>
</feature>
<reference key="1">
    <citation type="journal article" date="2009" name="PLoS ONE">
        <title>Genome degradation in Brucella ovis corresponds with narrowing of its host range and tissue tropism.</title>
        <authorList>
            <person name="Tsolis R.M."/>
            <person name="Seshadri R."/>
            <person name="Santos R.L."/>
            <person name="Sangari F.J."/>
            <person name="Lobo J.M."/>
            <person name="de Jong M.F."/>
            <person name="Ren Q."/>
            <person name="Myers G."/>
            <person name="Brinkac L.M."/>
            <person name="Nelson W.C."/>
            <person name="Deboy R.T."/>
            <person name="Angiuoli S."/>
            <person name="Khouri H."/>
            <person name="Dimitrov G."/>
            <person name="Robinson J.R."/>
            <person name="Mulligan S."/>
            <person name="Walker R.L."/>
            <person name="Elzer P.E."/>
            <person name="Hassan K.A."/>
            <person name="Paulsen I.T."/>
        </authorList>
    </citation>
    <scope>NUCLEOTIDE SEQUENCE [LARGE SCALE GENOMIC DNA]</scope>
    <source>
        <strain>ATCC 25840 / 63/290 / NCTC 10512</strain>
    </source>
</reference>
<protein>
    <recommendedName>
        <fullName evidence="1">Small ribosomal subunit protein bS21</fullName>
    </recommendedName>
    <alternativeName>
        <fullName evidence="2">30S ribosomal protein S21</fullName>
    </alternativeName>
</protein>
<evidence type="ECO:0000255" key="1">
    <source>
        <dbReference type="HAMAP-Rule" id="MF_00358"/>
    </source>
</evidence>
<evidence type="ECO:0000305" key="2"/>
<sequence>MQVLVRDNNVDQALRALKKKMQREGIFREMKMRGHYEKPSEKRAREKAEAVRRARKLARKRAQREGLIGGRTGAR</sequence>
<dbReference type="EMBL" id="CP000709">
    <property type="protein sequence ID" value="ABQ62532.1"/>
    <property type="molecule type" value="Genomic_DNA"/>
</dbReference>
<dbReference type="RefSeq" id="WP_002965682.1">
    <property type="nucleotide sequence ID" value="NC_009504.1"/>
</dbReference>
<dbReference type="SMR" id="A5VVM8"/>
<dbReference type="GeneID" id="97533017"/>
<dbReference type="KEGG" id="bov:BOV_A0906"/>
<dbReference type="HOGENOM" id="CLU_159258_0_1_5"/>
<dbReference type="Proteomes" id="UP000006383">
    <property type="component" value="Chromosome II"/>
</dbReference>
<dbReference type="GO" id="GO:1990904">
    <property type="term" value="C:ribonucleoprotein complex"/>
    <property type="evidence" value="ECO:0007669"/>
    <property type="project" value="UniProtKB-KW"/>
</dbReference>
<dbReference type="GO" id="GO:0005840">
    <property type="term" value="C:ribosome"/>
    <property type="evidence" value="ECO:0007669"/>
    <property type="project" value="UniProtKB-KW"/>
</dbReference>
<dbReference type="GO" id="GO:0003735">
    <property type="term" value="F:structural constituent of ribosome"/>
    <property type="evidence" value="ECO:0007669"/>
    <property type="project" value="InterPro"/>
</dbReference>
<dbReference type="GO" id="GO:0006412">
    <property type="term" value="P:translation"/>
    <property type="evidence" value="ECO:0007669"/>
    <property type="project" value="UniProtKB-UniRule"/>
</dbReference>
<dbReference type="Gene3D" id="1.20.5.1150">
    <property type="entry name" value="Ribosomal protein S8"/>
    <property type="match status" value="1"/>
</dbReference>
<dbReference type="HAMAP" id="MF_00358">
    <property type="entry name" value="Ribosomal_bS21"/>
    <property type="match status" value="1"/>
</dbReference>
<dbReference type="InterPro" id="IPR001911">
    <property type="entry name" value="Ribosomal_bS21"/>
</dbReference>
<dbReference type="InterPro" id="IPR018278">
    <property type="entry name" value="Ribosomal_bS21_CS"/>
</dbReference>
<dbReference type="InterPro" id="IPR038380">
    <property type="entry name" value="Ribosomal_bS21_sf"/>
</dbReference>
<dbReference type="NCBIfam" id="TIGR00030">
    <property type="entry name" value="S21p"/>
    <property type="match status" value="1"/>
</dbReference>
<dbReference type="PANTHER" id="PTHR21109">
    <property type="entry name" value="MITOCHONDRIAL 28S RIBOSOMAL PROTEIN S21"/>
    <property type="match status" value="1"/>
</dbReference>
<dbReference type="PANTHER" id="PTHR21109:SF0">
    <property type="entry name" value="SMALL RIBOSOMAL SUBUNIT PROTEIN BS21M"/>
    <property type="match status" value="1"/>
</dbReference>
<dbReference type="Pfam" id="PF01165">
    <property type="entry name" value="Ribosomal_S21"/>
    <property type="match status" value="1"/>
</dbReference>
<dbReference type="PRINTS" id="PR00976">
    <property type="entry name" value="RIBOSOMALS21"/>
</dbReference>
<dbReference type="PROSITE" id="PS01181">
    <property type="entry name" value="RIBOSOMAL_S21"/>
    <property type="match status" value="1"/>
</dbReference>
<gene>
    <name evidence="1" type="primary">rpsU</name>
    <name type="ordered locus">BOV_A0906</name>
</gene>